<dbReference type="EC" id="5.3.1.16" evidence="1"/>
<dbReference type="EMBL" id="CP001095">
    <property type="protein sequence ID" value="ACJ51931.1"/>
    <property type="molecule type" value="Genomic_DNA"/>
</dbReference>
<dbReference type="EMBL" id="AP010889">
    <property type="protein sequence ID" value="BAJ68436.1"/>
    <property type="molecule type" value="Genomic_DNA"/>
</dbReference>
<dbReference type="SMR" id="B7GQ51"/>
<dbReference type="KEGG" id="bln:Blon_0828"/>
<dbReference type="KEGG" id="blon:BLIJ_0844"/>
<dbReference type="PATRIC" id="fig|391904.8.peg.851"/>
<dbReference type="HOGENOM" id="CLU_048577_1_1_11"/>
<dbReference type="UniPathway" id="UPA00031">
    <property type="reaction ID" value="UER00009"/>
</dbReference>
<dbReference type="Proteomes" id="UP000001360">
    <property type="component" value="Chromosome"/>
</dbReference>
<dbReference type="GO" id="GO:0005737">
    <property type="term" value="C:cytoplasm"/>
    <property type="evidence" value="ECO:0007669"/>
    <property type="project" value="UniProtKB-SubCell"/>
</dbReference>
<dbReference type="GO" id="GO:0003949">
    <property type="term" value="F:1-(5-phosphoribosyl)-5-[(5-phosphoribosylamino)methylideneamino]imidazole-4-carboxamide isomerase activity"/>
    <property type="evidence" value="ECO:0007669"/>
    <property type="project" value="UniProtKB-UniRule"/>
</dbReference>
<dbReference type="GO" id="GO:0004640">
    <property type="term" value="F:phosphoribosylanthranilate isomerase activity"/>
    <property type="evidence" value="ECO:0007669"/>
    <property type="project" value="InterPro"/>
</dbReference>
<dbReference type="GO" id="GO:0000105">
    <property type="term" value="P:L-histidine biosynthetic process"/>
    <property type="evidence" value="ECO:0007669"/>
    <property type="project" value="UniProtKB-UniRule"/>
</dbReference>
<dbReference type="GO" id="GO:0000162">
    <property type="term" value="P:L-tryptophan biosynthetic process"/>
    <property type="evidence" value="ECO:0007669"/>
    <property type="project" value="InterPro"/>
</dbReference>
<dbReference type="CDD" id="cd04732">
    <property type="entry name" value="HisA"/>
    <property type="match status" value="1"/>
</dbReference>
<dbReference type="FunFam" id="3.20.20.70:FF:000009">
    <property type="entry name" value="1-(5-phosphoribosyl)-5-[(5-phosphoribosylamino)methylideneamino] imidazole-4-carboxamide isomerase"/>
    <property type="match status" value="1"/>
</dbReference>
<dbReference type="Gene3D" id="3.20.20.70">
    <property type="entry name" value="Aldolase class I"/>
    <property type="match status" value="1"/>
</dbReference>
<dbReference type="HAMAP" id="MF_01014">
    <property type="entry name" value="HisA"/>
    <property type="match status" value="1"/>
</dbReference>
<dbReference type="InterPro" id="IPR013785">
    <property type="entry name" value="Aldolase_TIM"/>
</dbReference>
<dbReference type="InterPro" id="IPR006062">
    <property type="entry name" value="His_biosynth"/>
</dbReference>
<dbReference type="InterPro" id="IPR010188">
    <property type="entry name" value="HisA/PriA_Actinobacteria"/>
</dbReference>
<dbReference type="InterPro" id="IPR044524">
    <property type="entry name" value="Isoase_HisA-like"/>
</dbReference>
<dbReference type="InterPro" id="IPR023016">
    <property type="entry name" value="Isoase_HisA-like_bact"/>
</dbReference>
<dbReference type="InterPro" id="IPR011060">
    <property type="entry name" value="RibuloseP-bd_barrel"/>
</dbReference>
<dbReference type="NCBIfam" id="TIGR01919">
    <property type="entry name" value="hisA-trpF"/>
    <property type="match status" value="1"/>
</dbReference>
<dbReference type="PANTHER" id="PTHR43090">
    <property type="entry name" value="1-(5-PHOSPHORIBOSYL)-5-[(5-PHOSPHORIBOSYLAMINO)METHYLIDENEAMINO] IMIDAZOLE-4-CARBOXAMIDE ISOMERASE"/>
    <property type="match status" value="1"/>
</dbReference>
<dbReference type="PANTHER" id="PTHR43090:SF2">
    <property type="entry name" value="1-(5-PHOSPHORIBOSYL)-5-[(5-PHOSPHORIBOSYLAMINO)METHYLIDENEAMINO] IMIDAZOLE-4-CARBOXAMIDE ISOMERASE"/>
    <property type="match status" value="1"/>
</dbReference>
<dbReference type="Pfam" id="PF00977">
    <property type="entry name" value="His_biosynth"/>
    <property type="match status" value="1"/>
</dbReference>
<dbReference type="SUPFAM" id="SSF51366">
    <property type="entry name" value="Ribulose-phoshate binding barrel"/>
    <property type="match status" value="1"/>
</dbReference>
<proteinExistence type="inferred from homology"/>
<protein>
    <recommendedName>
        <fullName evidence="1">1-(5-phosphoribosyl)-5-[(5-phosphoribosylamino)methylideneamino] imidazole-4-carboxamide isomerase</fullName>
        <ecNumber evidence="1">5.3.1.16</ecNumber>
    </recommendedName>
    <alternativeName>
        <fullName evidence="1">Phosphoribosylformimino-5-aminoimidazole carboxamide ribotide isomerase</fullName>
    </alternativeName>
</protein>
<evidence type="ECO:0000255" key="1">
    <source>
        <dbReference type="HAMAP-Rule" id="MF_01014"/>
    </source>
</evidence>
<accession>B7GQ51</accession>
<accession>E8MR11</accession>
<reference key="1">
    <citation type="journal article" date="2008" name="Proc. Natl. Acad. Sci. U.S.A.">
        <title>The genome sequence of Bifidobacterium longum subsp. infantis reveals adaptations for milk utilization within the infant microbiome.</title>
        <authorList>
            <person name="Sela D.A."/>
            <person name="Chapman J."/>
            <person name="Adeuya A."/>
            <person name="Kim J.H."/>
            <person name="Chen F."/>
            <person name="Whitehead T.R."/>
            <person name="Lapidus A."/>
            <person name="Rokhsar D.S."/>
            <person name="Lebrilla C.B."/>
            <person name="German J.B."/>
            <person name="Price N.P."/>
            <person name="Richardson P.M."/>
            <person name="Mills D.A."/>
        </authorList>
    </citation>
    <scope>NUCLEOTIDE SEQUENCE [LARGE SCALE GENOMIC DNA]</scope>
    <source>
        <strain>ATCC 15697 / DSM 20088 / JCM 1222 / NCTC 11817 / S12</strain>
    </source>
</reference>
<reference key="2">
    <citation type="journal article" date="2011" name="Nature">
        <title>Bifidobacteria can protect from enteropathogenic infection through production of acetate.</title>
        <authorList>
            <person name="Fukuda S."/>
            <person name="Toh H."/>
            <person name="Hase K."/>
            <person name="Oshima K."/>
            <person name="Nakanishi Y."/>
            <person name="Yoshimura K."/>
            <person name="Tobe T."/>
            <person name="Clarke J.M."/>
            <person name="Topping D.L."/>
            <person name="Suzuki T."/>
            <person name="Taylor T.D."/>
            <person name="Itoh K."/>
            <person name="Kikuchi J."/>
            <person name="Morita H."/>
            <person name="Hattori M."/>
            <person name="Ohno H."/>
        </authorList>
    </citation>
    <scope>NUCLEOTIDE SEQUENCE [LARGE SCALE GENOMIC DNA]</scope>
    <source>
        <strain>ATCC 15697 / DSM 20088 / JCM 1222 / NCTC 11817 / S12</strain>
    </source>
</reference>
<feature type="chain" id="PRO_1000148954" description="1-(5-phosphoribosyl)-5-[(5-phosphoribosylamino)methylideneamino] imidazole-4-carboxamide isomerase">
    <location>
        <begin position="1"/>
        <end position="241"/>
    </location>
</feature>
<feature type="active site" description="Proton acceptor" evidence="1">
    <location>
        <position position="10"/>
    </location>
</feature>
<feature type="active site" description="Proton donor" evidence="1">
    <location>
        <position position="131"/>
    </location>
</feature>
<keyword id="KW-0028">Amino-acid biosynthesis</keyword>
<keyword id="KW-0963">Cytoplasm</keyword>
<keyword id="KW-0368">Histidine biosynthesis</keyword>
<keyword id="KW-0413">Isomerase</keyword>
<gene>
    <name evidence="1" type="primary">hisA</name>
    <name type="ordered locus">Blon_0828</name>
    <name type="ordered locus">BLIJ_0844</name>
</gene>
<organism>
    <name type="scientific">Bifidobacterium longum subsp. infantis (strain ATCC 15697 / DSM 20088 / JCM 1222 / NCTC 11817 / S12)</name>
    <dbReference type="NCBI Taxonomy" id="391904"/>
    <lineage>
        <taxon>Bacteria</taxon>
        <taxon>Bacillati</taxon>
        <taxon>Actinomycetota</taxon>
        <taxon>Actinomycetes</taxon>
        <taxon>Bifidobacteriales</taxon>
        <taxon>Bifidobacteriaceae</taxon>
        <taxon>Bifidobacterium</taxon>
    </lineage>
</organism>
<name>HIS4_BIFLS</name>
<comment type="catalytic activity">
    <reaction evidence="1">
        <text>1-(5-phospho-beta-D-ribosyl)-5-[(5-phospho-beta-D-ribosylamino)methylideneamino]imidazole-4-carboxamide = 5-[(5-phospho-1-deoxy-D-ribulos-1-ylimino)methylamino]-1-(5-phospho-beta-D-ribosyl)imidazole-4-carboxamide</text>
        <dbReference type="Rhea" id="RHEA:15469"/>
        <dbReference type="ChEBI" id="CHEBI:58435"/>
        <dbReference type="ChEBI" id="CHEBI:58525"/>
        <dbReference type="EC" id="5.3.1.16"/>
    </reaction>
</comment>
<comment type="pathway">
    <text evidence="1">Amino-acid biosynthesis; L-histidine biosynthesis; L-histidine from 5-phospho-alpha-D-ribose 1-diphosphate: step 4/9.</text>
</comment>
<comment type="subcellular location">
    <subcellularLocation>
        <location evidence="1">Cytoplasm</location>
    </subcellularLocation>
</comment>
<comment type="similarity">
    <text evidence="1">Belongs to the HisA/HisF family.</text>
</comment>
<sequence length="241" mass="25758">MSLTLLPAVDVRDGKAVRLRQGESGSETDYGSPFEAARTWVEAGAEWIHLVDLDAAFGTGNNRDQLREIVHELGDRVNIELSGGVRDDASLDAALEAGAARVNIGTAALENPDWTASVIKKYGDRVAVGLDVRGHTLAARGWTREGGDLFETMKFLDSVGCSRYVVTDVAKDGMMSGPNIQLLREVAERTDAKVTASGGISKLDDLRAIKELAEIGVDSAILGKSLYARAFTLQEALAVAK</sequence>